<dbReference type="EMBL" id="CH479181">
    <property type="protein sequence ID" value="EDW32295.1"/>
    <property type="molecule type" value="Genomic_DNA"/>
</dbReference>
<dbReference type="SMR" id="B4GBN7"/>
<dbReference type="STRING" id="7234.B4GBN7"/>
<dbReference type="EnsemblMetazoa" id="FBtr0176121">
    <property type="protein sequence ID" value="FBpp0174613"/>
    <property type="gene ID" value="FBgn0148116"/>
</dbReference>
<dbReference type="EnsemblMetazoa" id="XM_002016369.2">
    <property type="protein sequence ID" value="XP_002016405.1"/>
    <property type="gene ID" value="LOC6590536"/>
</dbReference>
<dbReference type="GeneID" id="6590536"/>
<dbReference type="KEGG" id="dpe:6590536"/>
<dbReference type="CTD" id="36460"/>
<dbReference type="eggNOG" id="KOG3953">
    <property type="taxonomic scope" value="Eukaryota"/>
</dbReference>
<dbReference type="HOGENOM" id="CLU_046756_1_0_1"/>
<dbReference type="OMA" id="ATKRASM"/>
<dbReference type="OrthoDB" id="2398163at2759"/>
<dbReference type="PhylomeDB" id="B4GBN7"/>
<dbReference type="UniPathway" id="UPA00143"/>
<dbReference type="Proteomes" id="UP000008744">
    <property type="component" value="Unassembled WGS sequence"/>
</dbReference>
<dbReference type="GO" id="GO:0005938">
    <property type="term" value="C:cell cortex"/>
    <property type="evidence" value="ECO:0007669"/>
    <property type="project" value="EnsemblMetazoa"/>
</dbReference>
<dbReference type="GO" id="GO:0031594">
    <property type="term" value="C:neuromuscular junction"/>
    <property type="evidence" value="ECO:0000250"/>
    <property type="project" value="UniProtKB"/>
</dbReference>
<dbReference type="GO" id="GO:0005634">
    <property type="term" value="C:nucleus"/>
    <property type="evidence" value="ECO:0007669"/>
    <property type="project" value="EnsemblMetazoa"/>
</dbReference>
<dbReference type="GO" id="GO:0045495">
    <property type="term" value="C:pole plasm"/>
    <property type="evidence" value="ECO:0007669"/>
    <property type="project" value="EnsemblMetazoa"/>
</dbReference>
<dbReference type="GO" id="GO:0019005">
    <property type="term" value="C:SCF ubiquitin ligase complex"/>
    <property type="evidence" value="ECO:0007669"/>
    <property type="project" value="EnsemblMetazoa"/>
</dbReference>
<dbReference type="GO" id="GO:0010629">
    <property type="term" value="P:negative regulation of gene expression"/>
    <property type="evidence" value="ECO:0007669"/>
    <property type="project" value="EnsemblMetazoa"/>
</dbReference>
<dbReference type="GO" id="GO:0045886">
    <property type="term" value="P:negative regulation of synaptic assembly at neuromuscular junction"/>
    <property type="evidence" value="ECO:0000250"/>
    <property type="project" value="UniProtKB"/>
</dbReference>
<dbReference type="GO" id="GO:0007274">
    <property type="term" value="P:neuromuscular synaptic transmission"/>
    <property type="evidence" value="ECO:0000250"/>
    <property type="project" value="UniProtKB"/>
</dbReference>
<dbReference type="GO" id="GO:0045732">
    <property type="term" value="P:positive regulation of protein catabolic process"/>
    <property type="evidence" value="ECO:0007669"/>
    <property type="project" value="EnsemblMetazoa"/>
</dbReference>
<dbReference type="GO" id="GO:0043161">
    <property type="term" value="P:proteasome-mediated ubiquitin-dependent protein catabolic process"/>
    <property type="evidence" value="ECO:0007669"/>
    <property type="project" value="TreeGrafter"/>
</dbReference>
<dbReference type="GO" id="GO:0016567">
    <property type="term" value="P:protein ubiquitination"/>
    <property type="evidence" value="ECO:0007669"/>
    <property type="project" value="UniProtKB-UniPathway"/>
</dbReference>
<dbReference type="GO" id="GO:0060386">
    <property type="term" value="P:synapse assembly involved in innervation"/>
    <property type="evidence" value="ECO:0007669"/>
    <property type="project" value="TreeGrafter"/>
</dbReference>
<dbReference type="CDD" id="cd12907">
    <property type="entry name" value="SPRY_Fbox"/>
    <property type="match status" value="1"/>
</dbReference>
<dbReference type="FunFam" id="1.20.1280.50:FF:000069">
    <property type="entry name" value="F-box/SPRY domain-containing protein 1"/>
    <property type="match status" value="1"/>
</dbReference>
<dbReference type="FunFam" id="2.60.120.920:FF:000017">
    <property type="entry name" value="F-box/SPRY domain-containing protein 1"/>
    <property type="match status" value="1"/>
</dbReference>
<dbReference type="Gene3D" id="1.20.1280.50">
    <property type="match status" value="1"/>
</dbReference>
<dbReference type="Gene3D" id="2.60.120.920">
    <property type="match status" value="1"/>
</dbReference>
<dbReference type="InterPro" id="IPR001870">
    <property type="entry name" value="B30.2/SPRY"/>
</dbReference>
<dbReference type="InterPro" id="IPR043136">
    <property type="entry name" value="B30.2/SPRY_sf"/>
</dbReference>
<dbReference type="InterPro" id="IPR013320">
    <property type="entry name" value="ConA-like_dom_sf"/>
</dbReference>
<dbReference type="InterPro" id="IPR036047">
    <property type="entry name" value="F-box-like_dom_sf"/>
</dbReference>
<dbReference type="InterPro" id="IPR001810">
    <property type="entry name" value="F-box_dom"/>
</dbReference>
<dbReference type="InterPro" id="IPR050672">
    <property type="entry name" value="FBXO45-Fsn/SPSB_families"/>
</dbReference>
<dbReference type="InterPro" id="IPR003877">
    <property type="entry name" value="SPRY_dom"/>
</dbReference>
<dbReference type="InterPro" id="IPR035784">
    <property type="entry name" value="SPRY_FBXO45"/>
</dbReference>
<dbReference type="PANTHER" id="PTHR12245:SF7">
    <property type="entry name" value="F-BOX_SPRY DOMAIN-CONTAINING PROTEIN 1"/>
    <property type="match status" value="1"/>
</dbReference>
<dbReference type="PANTHER" id="PTHR12245">
    <property type="entry name" value="SPRY DOMAIN CONTAINING SOCS BOX PROTEIN"/>
    <property type="match status" value="1"/>
</dbReference>
<dbReference type="Pfam" id="PF12937">
    <property type="entry name" value="F-box-like"/>
    <property type="match status" value="1"/>
</dbReference>
<dbReference type="Pfam" id="PF00622">
    <property type="entry name" value="SPRY"/>
    <property type="match status" value="1"/>
</dbReference>
<dbReference type="SMART" id="SM00449">
    <property type="entry name" value="SPRY"/>
    <property type="match status" value="1"/>
</dbReference>
<dbReference type="SUPFAM" id="SSF49899">
    <property type="entry name" value="Concanavalin A-like lectins/glucanases"/>
    <property type="match status" value="1"/>
</dbReference>
<dbReference type="SUPFAM" id="SSF81383">
    <property type="entry name" value="F-box domain"/>
    <property type="match status" value="1"/>
</dbReference>
<dbReference type="PROSITE" id="PS50188">
    <property type="entry name" value="B302_SPRY"/>
    <property type="match status" value="1"/>
</dbReference>
<feature type="chain" id="PRO_0000383314" description="F-box/SPRY domain-containing protein 1">
    <location>
        <begin position="1"/>
        <end position="255"/>
    </location>
</feature>
<feature type="domain" description="F-box" evidence="3">
    <location>
        <begin position="3"/>
        <end position="51"/>
    </location>
</feature>
<feature type="domain" description="B30.2/SPRY" evidence="4">
    <location>
        <begin position="61"/>
        <end position="253"/>
    </location>
</feature>
<proteinExistence type="inferred from homology"/>
<keyword id="KW-0524">Neurogenesis</keyword>
<keyword id="KW-1185">Reference proteome</keyword>
<keyword id="KW-0770">Synapse</keyword>
<keyword id="KW-0833">Ubl conjugation pathway</keyword>
<comment type="function">
    <text evidence="1">Required in the presynaptic motoneuron to down-regulate the levels of wnd and restrain synaptic terminal growth at the neuromuscular junction (NMJ).</text>
</comment>
<comment type="pathway">
    <text evidence="2">Protein modification; protein ubiquitination.</text>
</comment>
<comment type="subunit">
    <text evidence="2">Component of an E3 ubiquitin ligase complex composed of hiw and Fsn.</text>
</comment>
<comment type="subcellular location">
    <subcellularLocation>
        <location evidence="2">Synapse</location>
    </subcellularLocation>
</comment>
<comment type="similarity">
    <text evidence="5">Belongs to the FBXO45/Fsn family.</text>
</comment>
<protein>
    <recommendedName>
        <fullName evidence="2">F-box/SPRY domain-containing protein 1</fullName>
    </recommendedName>
</protein>
<sequence length="255" mass="28760">MVDRVAALCNYNVLEVVFSYLDLNDLGRCSQVCKSWFHFLNDENSDVWRFHCLNKLPKEVTKSELLSPVPTYKTKLRAFFHSWNPSDCSRNVYIKPNGFTLHRNPVAQSTDAARAKIGFRHGRHAWEVIWEGPLGTVAVIGISTKEAALQCHGYVALLGSDDQSWGWNLVENHLLHNGDMQGGYPLLNNAPKYQVGERIRVILDCDDNTLSFEKNYEFLGVAFRGLPDKKLFPTVSAVYGNTEVSMVYCGTPLDG</sequence>
<organism>
    <name type="scientific">Drosophila persimilis</name>
    <name type="common">Fruit fly</name>
    <dbReference type="NCBI Taxonomy" id="7234"/>
    <lineage>
        <taxon>Eukaryota</taxon>
        <taxon>Metazoa</taxon>
        <taxon>Ecdysozoa</taxon>
        <taxon>Arthropoda</taxon>
        <taxon>Hexapoda</taxon>
        <taxon>Insecta</taxon>
        <taxon>Pterygota</taxon>
        <taxon>Neoptera</taxon>
        <taxon>Endopterygota</taxon>
        <taxon>Diptera</taxon>
        <taxon>Brachycera</taxon>
        <taxon>Muscomorpha</taxon>
        <taxon>Ephydroidea</taxon>
        <taxon>Drosophilidae</taxon>
        <taxon>Drosophila</taxon>
        <taxon>Sophophora</taxon>
    </lineage>
</organism>
<gene>
    <name evidence="2" type="primary">Fsn</name>
    <name type="ORF">GL10506</name>
</gene>
<reference evidence="6" key="1">
    <citation type="journal article" date="2007" name="Nature">
        <title>Evolution of genes and genomes on the Drosophila phylogeny.</title>
        <authorList>
            <consortium name="Drosophila 12 genomes consortium"/>
        </authorList>
    </citation>
    <scope>NUCLEOTIDE SEQUENCE [LARGE SCALE GENOMIC DNA]</scope>
    <source>
        <strain>MSH-3 / Tucson 14011-0111.49</strain>
    </source>
</reference>
<accession>B4GBN7</accession>
<name>FBSP1_DROPE</name>
<evidence type="ECO:0000250" key="1"/>
<evidence type="ECO:0000250" key="2">
    <source>
        <dbReference type="UniProtKB" id="Q9V6L9"/>
    </source>
</evidence>
<evidence type="ECO:0000255" key="3"/>
<evidence type="ECO:0000255" key="4">
    <source>
        <dbReference type="PROSITE-ProRule" id="PRU00548"/>
    </source>
</evidence>
<evidence type="ECO:0000305" key="5"/>
<evidence type="ECO:0000312" key="6">
    <source>
        <dbReference type="EMBL" id="EDW32295.1"/>
    </source>
</evidence>